<feature type="chain" id="PRO_0000235079" description="4-diphosphocytidyl-2-C-methyl-D-erythritol kinase">
    <location>
        <begin position="1"/>
        <end position="288"/>
    </location>
</feature>
<feature type="active site" evidence="1">
    <location>
        <position position="8"/>
    </location>
</feature>
<feature type="active site" evidence="1">
    <location>
        <position position="132"/>
    </location>
</feature>
<feature type="binding site" evidence="1">
    <location>
        <begin position="90"/>
        <end position="100"/>
    </location>
    <ligand>
        <name>ATP</name>
        <dbReference type="ChEBI" id="CHEBI:30616"/>
    </ligand>
</feature>
<organism>
    <name type="scientific">Chlamydia trachomatis serovar A (strain ATCC VR-571B / DSM 19440 / HAR-13)</name>
    <dbReference type="NCBI Taxonomy" id="315277"/>
    <lineage>
        <taxon>Bacteria</taxon>
        <taxon>Pseudomonadati</taxon>
        <taxon>Chlamydiota</taxon>
        <taxon>Chlamydiia</taxon>
        <taxon>Chlamydiales</taxon>
        <taxon>Chlamydiaceae</taxon>
        <taxon>Chlamydia/Chlamydophila group</taxon>
        <taxon>Chlamydia</taxon>
    </lineage>
</organism>
<reference key="1">
    <citation type="journal article" date="2005" name="Infect. Immun.">
        <title>Comparative genomic analysis of Chlamydia trachomatis oculotropic and genitotropic strains.</title>
        <authorList>
            <person name="Carlson J.H."/>
            <person name="Porcella S.F."/>
            <person name="McClarty G."/>
            <person name="Caldwell H.D."/>
        </authorList>
    </citation>
    <scope>NUCLEOTIDE SEQUENCE [LARGE SCALE GENOMIC DNA]</scope>
    <source>
        <strain>ATCC VR-571B / DSM 19440 / HAR-13</strain>
    </source>
</reference>
<name>ISPE_CHLTA</name>
<proteinExistence type="inferred from homology"/>
<comment type="function">
    <text evidence="1">Catalyzes the phosphorylation of the position 2 hydroxy group of 4-diphosphocytidyl-2C-methyl-D-erythritol.</text>
</comment>
<comment type="catalytic activity">
    <reaction evidence="1">
        <text>4-CDP-2-C-methyl-D-erythritol + ATP = 4-CDP-2-C-methyl-D-erythritol 2-phosphate + ADP + H(+)</text>
        <dbReference type="Rhea" id="RHEA:18437"/>
        <dbReference type="ChEBI" id="CHEBI:15378"/>
        <dbReference type="ChEBI" id="CHEBI:30616"/>
        <dbReference type="ChEBI" id="CHEBI:57823"/>
        <dbReference type="ChEBI" id="CHEBI:57919"/>
        <dbReference type="ChEBI" id="CHEBI:456216"/>
        <dbReference type="EC" id="2.7.1.148"/>
    </reaction>
</comment>
<comment type="pathway">
    <text evidence="1">Isoprenoid biosynthesis; isopentenyl diphosphate biosynthesis via DXP pathway; isopentenyl diphosphate from 1-deoxy-D-xylulose 5-phosphate: step 3/6.</text>
</comment>
<comment type="similarity">
    <text evidence="1">Belongs to the GHMP kinase family. IspE subfamily.</text>
</comment>
<protein>
    <recommendedName>
        <fullName evidence="1">4-diphosphocytidyl-2-C-methyl-D-erythritol kinase</fullName>
        <shortName evidence="1">CMK</shortName>
        <ecNumber evidence="1">2.7.1.148</ecNumber>
    </recommendedName>
    <alternativeName>
        <fullName evidence="1">4-(cytidine-5'-diphospho)-2-C-methyl-D-erythritol kinase</fullName>
    </alternativeName>
</protein>
<sequence length="288" mass="31866">MHFLSPAKLNLFLQILGRREDDFHEIVTRYQAIAFGDQLSLSISSRDSLQVINACHLETPSNSIWKSVALFRRYTGITTPVSWRVVKQIPVGAGLAGGSSNAATALFALNQIFKTGLSDEEMRSLAEQLGVDTPFFFSTGAALGVARGEKIIALEESVSDRYVLYFSSEGVLTSRAFAAVQPSDCSSRKNLEYTQNDLEKPVFRLRLDLKEKKHWLESLWAELPVYIGLTGSGATLFVRYPEILEKDLSYAAQIQRAVTLSGGLLTSPIRRDPTAWYSIYSESALAAT</sequence>
<evidence type="ECO:0000255" key="1">
    <source>
        <dbReference type="HAMAP-Rule" id="MF_00061"/>
    </source>
</evidence>
<accession>Q3KKN7</accession>
<dbReference type="EC" id="2.7.1.148" evidence="1"/>
<dbReference type="EMBL" id="CP000051">
    <property type="protein sequence ID" value="AAX51085.1"/>
    <property type="molecule type" value="Genomic_DNA"/>
</dbReference>
<dbReference type="RefSeq" id="WP_011324873.1">
    <property type="nucleotide sequence ID" value="NC_007429.1"/>
</dbReference>
<dbReference type="SMR" id="Q3KKN7"/>
<dbReference type="KEGG" id="cta:CTA_0876"/>
<dbReference type="HOGENOM" id="CLU_053057_3_0_0"/>
<dbReference type="UniPathway" id="UPA00056">
    <property type="reaction ID" value="UER00094"/>
</dbReference>
<dbReference type="Proteomes" id="UP000002532">
    <property type="component" value="Chromosome"/>
</dbReference>
<dbReference type="GO" id="GO:0050515">
    <property type="term" value="F:4-(cytidine 5'-diphospho)-2-C-methyl-D-erythritol kinase activity"/>
    <property type="evidence" value="ECO:0007669"/>
    <property type="project" value="UniProtKB-UniRule"/>
</dbReference>
<dbReference type="GO" id="GO:0005524">
    <property type="term" value="F:ATP binding"/>
    <property type="evidence" value="ECO:0007669"/>
    <property type="project" value="UniProtKB-UniRule"/>
</dbReference>
<dbReference type="GO" id="GO:0019288">
    <property type="term" value="P:isopentenyl diphosphate biosynthetic process, methylerythritol 4-phosphate pathway"/>
    <property type="evidence" value="ECO:0007669"/>
    <property type="project" value="UniProtKB-UniRule"/>
</dbReference>
<dbReference type="GO" id="GO:0016114">
    <property type="term" value="P:terpenoid biosynthetic process"/>
    <property type="evidence" value="ECO:0007669"/>
    <property type="project" value="InterPro"/>
</dbReference>
<dbReference type="Gene3D" id="3.30.230.10">
    <property type="match status" value="1"/>
</dbReference>
<dbReference type="Gene3D" id="3.30.70.890">
    <property type="entry name" value="GHMP kinase, C-terminal domain"/>
    <property type="match status" value="1"/>
</dbReference>
<dbReference type="HAMAP" id="MF_00061">
    <property type="entry name" value="IspE"/>
    <property type="match status" value="1"/>
</dbReference>
<dbReference type="InterPro" id="IPR036554">
    <property type="entry name" value="GHMP_kinase_C_sf"/>
</dbReference>
<dbReference type="InterPro" id="IPR006204">
    <property type="entry name" value="GHMP_kinase_N_dom"/>
</dbReference>
<dbReference type="InterPro" id="IPR004424">
    <property type="entry name" value="IspE"/>
</dbReference>
<dbReference type="InterPro" id="IPR020568">
    <property type="entry name" value="Ribosomal_Su5_D2-typ_SF"/>
</dbReference>
<dbReference type="InterPro" id="IPR014721">
    <property type="entry name" value="Ribsml_uS5_D2-typ_fold_subgr"/>
</dbReference>
<dbReference type="NCBIfam" id="TIGR00154">
    <property type="entry name" value="ispE"/>
    <property type="match status" value="1"/>
</dbReference>
<dbReference type="PANTHER" id="PTHR43527">
    <property type="entry name" value="4-DIPHOSPHOCYTIDYL-2-C-METHYL-D-ERYTHRITOL KINASE, CHLOROPLASTIC"/>
    <property type="match status" value="1"/>
</dbReference>
<dbReference type="PANTHER" id="PTHR43527:SF2">
    <property type="entry name" value="4-DIPHOSPHOCYTIDYL-2-C-METHYL-D-ERYTHRITOL KINASE, CHLOROPLASTIC"/>
    <property type="match status" value="1"/>
</dbReference>
<dbReference type="Pfam" id="PF00288">
    <property type="entry name" value="GHMP_kinases_N"/>
    <property type="match status" value="1"/>
</dbReference>
<dbReference type="PIRSF" id="PIRSF010376">
    <property type="entry name" value="IspE"/>
    <property type="match status" value="1"/>
</dbReference>
<dbReference type="SUPFAM" id="SSF55060">
    <property type="entry name" value="GHMP Kinase, C-terminal domain"/>
    <property type="match status" value="1"/>
</dbReference>
<dbReference type="SUPFAM" id="SSF54211">
    <property type="entry name" value="Ribosomal protein S5 domain 2-like"/>
    <property type="match status" value="1"/>
</dbReference>
<keyword id="KW-0067">ATP-binding</keyword>
<keyword id="KW-0414">Isoprene biosynthesis</keyword>
<keyword id="KW-0418">Kinase</keyword>
<keyword id="KW-0547">Nucleotide-binding</keyword>
<keyword id="KW-0808">Transferase</keyword>
<gene>
    <name evidence="1" type="primary">ispE</name>
    <name type="ordered locus">CTA_0876</name>
</gene>